<organism>
    <name type="scientific">Staphylococcus epidermidis (strain ATCC 35984 / DSM 28319 / BCRC 17069 / CCUG 31568 / BM 3577 / RP62A)</name>
    <dbReference type="NCBI Taxonomy" id="176279"/>
    <lineage>
        <taxon>Bacteria</taxon>
        <taxon>Bacillati</taxon>
        <taxon>Bacillota</taxon>
        <taxon>Bacilli</taxon>
        <taxon>Bacillales</taxon>
        <taxon>Staphylococcaceae</taxon>
        <taxon>Staphylococcus</taxon>
    </lineage>
</organism>
<comment type="function">
    <text evidence="2">Peptide chain release factor 2 directs the termination of translation in response to the peptide chain termination codons UGA and UAA.</text>
</comment>
<comment type="subcellular location">
    <subcellularLocation>
        <location evidence="2">Cytoplasm</location>
    </subcellularLocation>
</comment>
<comment type="PTM">
    <text evidence="2">Methylated by PrmC. Methylation increases the termination efficiency of RF2.</text>
</comment>
<comment type="miscellaneous">
    <text evidence="1">The gene for this protein contains a UGA in-frame termination codon after Leu-24; a naturally occurring frameshift enables complete translation of RF-2. This provides a mechanism for the protein to regulate its own production (By similarity).</text>
</comment>
<comment type="similarity">
    <text evidence="2">Belongs to the prokaryotic/mitochondrial release factor family.</text>
</comment>
<proteinExistence type="inferred from homology"/>
<protein>
    <recommendedName>
        <fullName evidence="2">Peptide chain release factor 2</fullName>
        <shortName evidence="2">RF-2</shortName>
    </recommendedName>
</protein>
<keyword id="KW-0963">Cytoplasm</keyword>
<keyword id="KW-0488">Methylation</keyword>
<keyword id="KW-0648">Protein biosynthesis</keyword>
<keyword id="KW-1185">Reference proteome</keyword>
<keyword id="KW-0688">Ribosomal frameshifting</keyword>
<reference key="1">
    <citation type="journal article" date="2005" name="J. Bacteriol.">
        <title>Insights on evolution of virulence and resistance from the complete genome analysis of an early methicillin-resistant Staphylococcus aureus strain and a biofilm-producing methicillin-resistant Staphylococcus epidermidis strain.</title>
        <authorList>
            <person name="Gill S.R."/>
            <person name="Fouts D.E."/>
            <person name="Archer G.L."/>
            <person name="Mongodin E.F."/>
            <person name="DeBoy R.T."/>
            <person name="Ravel J."/>
            <person name="Paulsen I.T."/>
            <person name="Kolonay J.F."/>
            <person name="Brinkac L.M."/>
            <person name="Beanan M.J."/>
            <person name="Dodson R.J."/>
            <person name="Daugherty S.C."/>
            <person name="Madupu R."/>
            <person name="Angiuoli S.V."/>
            <person name="Durkin A.S."/>
            <person name="Haft D.H."/>
            <person name="Vamathevan J.J."/>
            <person name="Khouri H."/>
            <person name="Utterback T.R."/>
            <person name="Lee C."/>
            <person name="Dimitrov G."/>
            <person name="Jiang L."/>
            <person name="Qin H."/>
            <person name="Weidman J."/>
            <person name="Tran K."/>
            <person name="Kang K.H."/>
            <person name="Hance I.R."/>
            <person name="Nelson K.E."/>
            <person name="Fraser C.M."/>
        </authorList>
    </citation>
    <scope>NUCLEOTIDE SEQUENCE [LARGE SCALE GENOMIC DNA]</scope>
    <source>
        <strain>ATCC 35984 / DSM 28319 / BCRC 17069 / CCUG 31568 / BM 3577 / RP62A</strain>
    </source>
</reference>
<dbReference type="EMBL" id="CP000029">
    <property type="protein sequence ID" value="AAW53835.1"/>
    <property type="molecule type" value="Genomic_DNA"/>
</dbReference>
<dbReference type="SMR" id="Q5HQX5"/>
<dbReference type="STRING" id="176279.SERP0421"/>
<dbReference type="KEGG" id="ser:SERP0421"/>
<dbReference type="eggNOG" id="COG1186">
    <property type="taxonomic scope" value="Bacteria"/>
</dbReference>
<dbReference type="HOGENOM" id="CLU_221244_2_2_9"/>
<dbReference type="Proteomes" id="UP000000531">
    <property type="component" value="Chromosome"/>
</dbReference>
<dbReference type="GO" id="GO:0005737">
    <property type="term" value="C:cytoplasm"/>
    <property type="evidence" value="ECO:0007669"/>
    <property type="project" value="UniProtKB-SubCell"/>
</dbReference>
<dbReference type="GO" id="GO:0016149">
    <property type="term" value="F:translation release factor activity, codon specific"/>
    <property type="evidence" value="ECO:0007669"/>
    <property type="project" value="UniProtKB-UniRule"/>
</dbReference>
<dbReference type="GO" id="GO:0075523">
    <property type="term" value="P:viral translational frameshifting"/>
    <property type="evidence" value="ECO:0007669"/>
    <property type="project" value="UniProtKB-KW"/>
</dbReference>
<dbReference type="FunFam" id="3.30.160.20:FF:000010">
    <property type="entry name" value="Peptide chain release factor 2"/>
    <property type="match status" value="1"/>
</dbReference>
<dbReference type="Gene3D" id="3.30.160.20">
    <property type="match status" value="1"/>
</dbReference>
<dbReference type="Gene3D" id="3.30.70.1660">
    <property type="match status" value="1"/>
</dbReference>
<dbReference type="Gene3D" id="1.20.58.410">
    <property type="entry name" value="Release factor"/>
    <property type="match status" value="1"/>
</dbReference>
<dbReference type="HAMAP" id="MF_00094">
    <property type="entry name" value="Rel_fac_2"/>
    <property type="match status" value="1"/>
</dbReference>
<dbReference type="InterPro" id="IPR005139">
    <property type="entry name" value="PCRF"/>
</dbReference>
<dbReference type="InterPro" id="IPR000352">
    <property type="entry name" value="Pep_chain_release_fac_I"/>
</dbReference>
<dbReference type="InterPro" id="IPR045853">
    <property type="entry name" value="Pep_chain_release_fac_I_sf"/>
</dbReference>
<dbReference type="InterPro" id="IPR004374">
    <property type="entry name" value="PrfB"/>
</dbReference>
<dbReference type="NCBIfam" id="TIGR00020">
    <property type="entry name" value="prfB"/>
    <property type="match status" value="1"/>
</dbReference>
<dbReference type="PANTHER" id="PTHR43116:SF3">
    <property type="entry name" value="CLASS I PEPTIDE CHAIN RELEASE FACTOR"/>
    <property type="match status" value="1"/>
</dbReference>
<dbReference type="PANTHER" id="PTHR43116">
    <property type="entry name" value="PEPTIDE CHAIN RELEASE FACTOR 2"/>
    <property type="match status" value="1"/>
</dbReference>
<dbReference type="Pfam" id="PF03462">
    <property type="entry name" value="PCRF"/>
    <property type="match status" value="1"/>
</dbReference>
<dbReference type="Pfam" id="PF00472">
    <property type="entry name" value="RF-1"/>
    <property type="match status" value="1"/>
</dbReference>
<dbReference type="SMART" id="SM00937">
    <property type="entry name" value="PCRF"/>
    <property type="match status" value="1"/>
</dbReference>
<dbReference type="SUPFAM" id="SSF75620">
    <property type="entry name" value="Release factor"/>
    <property type="match status" value="1"/>
</dbReference>
<dbReference type="PROSITE" id="PS00745">
    <property type="entry name" value="RF_PROK_I"/>
    <property type="match status" value="1"/>
</dbReference>
<accession>Q5HQX5</accession>
<feature type="chain" id="PRO_0000166851" description="Peptide chain release factor 2">
    <location>
        <begin position="1"/>
        <end position="371"/>
    </location>
</feature>
<feature type="modified residue" description="N5-methylglutamine" evidence="2">
    <location>
        <position position="252"/>
    </location>
</feature>
<evidence type="ECO:0000250" key="1"/>
<evidence type="ECO:0000255" key="2">
    <source>
        <dbReference type="HAMAP-Rule" id="MF_00094"/>
    </source>
</evidence>
<sequence>MELSEIKRNLEEYQNHLNQIRGSLDLENKETNIQEYEEMMTDPDFWNDQTKAQDIIDKNNALKSIVNGYYQLTNAVDDMSATRELLQEEYDEDMKIELEEEVQQFEEQIDQYELQLLLDGPHDANNAILELHPGAGGTESQDWVSMLLRMYQRYCEQNGFKVETVDYLPGDEAGVKSVTLLIKGHNAYGYLKAEKGVHRLVRISPFDSSGRRHTSFASCDVIPDFNNDEIEIEINPDDITVDTFRASGAGGQHINKTESAIRITHHPTGIVVNNQNERSQIKNREAAMKMLKSKLYQLKLEEQEQEMAEIRGEQKDIGWGSQIRSYVFHPYSMIKDHRTNEETGKVDAVMDGEIGPFIEAYLRKEMDSRDV</sequence>
<gene>
    <name evidence="2" type="primary">prfB</name>
    <name type="ordered locus">SERP0421</name>
</gene>
<name>RF2_STAEQ</name>